<gene>
    <name type="primary">G1L7</name>
    <name type="ordered locus">Os01g0828900</name>
    <name type="ordered locus">LOC_Os01g61310</name>
    <name type="ORF">B1088C09.26</name>
</gene>
<feature type="chain" id="PRO_0000425310" description="Protein G1-like7">
    <location>
        <begin position="1"/>
        <end position="212"/>
    </location>
</feature>
<feature type="domain" description="ALOG" evidence="2">
    <location>
        <begin position="31"/>
        <end position="158"/>
    </location>
</feature>
<feature type="region of interest" description="Disordered" evidence="3">
    <location>
        <begin position="1"/>
        <end position="34"/>
    </location>
</feature>
<feature type="region of interest" description="Disordered" evidence="3">
    <location>
        <begin position="148"/>
        <end position="212"/>
    </location>
</feature>
<feature type="short sequence motif" description="Nuclear localization signal" evidence="1">
    <location>
        <begin position="156"/>
        <end position="160"/>
    </location>
</feature>
<feature type="compositionally biased region" description="Low complexity" evidence="3">
    <location>
        <begin position="1"/>
        <end position="22"/>
    </location>
</feature>
<feature type="compositionally biased region" description="Low complexity" evidence="3">
    <location>
        <begin position="167"/>
        <end position="182"/>
    </location>
</feature>
<feature type="compositionally biased region" description="Gly residues" evidence="3">
    <location>
        <begin position="183"/>
        <end position="194"/>
    </location>
</feature>
<feature type="compositionally biased region" description="Low complexity" evidence="3">
    <location>
        <begin position="195"/>
        <end position="212"/>
    </location>
</feature>
<reference key="1">
    <citation type="journal article" date="2009" name="Proc. Natl. Acad. Sci. U.S.A.">
        <title>The homeotic gene long sterile lemma (G1) specifies sterile lemma identity in the rice spikelet.</title>
        <authorList>
            <person name="Yoshida A."/>
            <person name="Suzaki Y."/>
            <person name="Tanaka W."/>
            <person name="Hirano H.-Y."/>
        </authorList>
    </citation>
    <scope>NUCLEOTIDE SEQUENCE [MRNA]</scope>
    <scope>GENE FAMILY</scope>
    <scope>NOMENCLATURE</scope>
    <source>
        <strain>cv. Nipponbare</strain>
    </source>
</reference>
<reference key="2">
    <citation type="journal article" date="2002" name="Nature">
        <title>The genome sequence and structure of rice chromosome 1.</title>
        <authorList>
            <person name="Sasaki T."/>
            <person name="Matsumoto T."/>
            <person name="Yamamoto K."/>
            <person name="Sakata K."/>
            <person name="Baba T."/>
            <person name="Katayose Y."/>
            <person name="Wu J."/>
            <person name="Niimura Y."/>
            <person name="Cheng Z."/>
            <person name="Nagamura Y."/>
            <person name="Antonio B.A."/>
            <person name="Kanamori H."/>
            <person name="Hosokawa S."/>
            <person name="Masukawa M."/>
            <person name="Arikawa K."/>
            <person name="Chiden Y."/>
            <person name="Hayashi M."/>
            <person name="Okamoto M."/>
            <person name="Ando T."/>
            <person name="Aoki H."/>
            <person name="Arita K."/>
            <person name="Hamada M."/>
            <person name="Harada C."/>
            <person name="Hijishita S."/>
            <person name="Honda M."/>
            <person name="Ichikawa Y."/>
            <person name="Idonuma A."/>
            <person name="Iijima M."/>
            <person name="Ikeda M."/>
            <person name="Ikeno M."/>
            <person name="Ito S."/>
            <person name="Ito T."/>
            <person name="Ito Y."/>
            <person name="Ito Y."/>
            <person name="Iwabuchi A."/>
            <person name="Kamiya K."/>
            <person name="Karasawa W."/>
            <person name="Katagiri S."/>
            <person name="Kikuta A."/>
            <person name="Kobayashi N."/>
            <person name="Kono I."/>
            <person name="Machita K."/>
            <person name="Maehara T."/>
            <person name="Mizuno H."/>
            <person name="Mizubayashi T."/>
            <person name="Mukai Y."/>
            <person name="Nagasaki H."/>
            <person name="Nakashima M."/>
            <person name="Nakama Y."/>
            <person name="Nakamichi Y."/>
            <person name="Nakamura M."/>
            <person name="Namiki N."/>
            <person name="Negishi M."/>
            <person name="Ohta I."/>
            <person name="Ono N."/>
            <person name="Saji S."/>
            <person name="Sakai K."/>
            <person name="Shibata M."/>
            <person name="Shimokawa T."/>
            <person name="Shomura A."/>
            <person name="Song J."/>
            <person name="Takazaki Y."/>
            <person name="Terasawa K."/>
            <person name="Tsuji K."/>
            <person name="Waki K."/>
            <person name="Yamagata H."/>
            <person name="Yamane H."/>
            <person name="Yoshiki S."/>
            <person name="Yoshihara R."/>
            <person name="Yukawa K."/>
            <person name="Zhong H."/>
            <person name="Iwama H."/>
            <person name="Endo T."/>
            <person name="Ito H."/>
            <person name="Hahn J.H."/>
            <person name="Kim H.-I."/>
            <person name="Eun M.-Y."/>
            <person name="Yano M."/>
            <person name="Jiang J."/>
            <person name="Gojobori T."/>
        </authorList>
    </citation>
    <scope>NUCLEOTIDE SEQUENCE [LARGE SCALE GENOMIC DNA]</scope>
    <source>
        <strain>cv. Nipponbare</strain>
    </source>
</reference>
<reference key="3">
    <citation type="journal article" date="2005" name="Nature">
        <title>The map-based sequence of the rice genome.</title>
        <authorList>
            <consortium name="International rice genome sequencing project (IRGSP)"/>
        </authorList>
    </citation>
    <scope>NUCLEOTIDE SEQUENCE [LARGE SCALE GENOMIC DNA]</scope>
    <source>
        <strain>cv. Nipponbare</strain>
    </source>
</reference>
<reference key="4">
    <citation type="journal article" date="2008" name="Nucleic Acids Res.">
        <title>The rice annotation project database (RAP-DB): 2008 update.</title>
        <authorList>
            <consortium name="The rice annotation project (RAP)"/>
        </authorList>
    </citation>
    <scope>GENOME REANNOTATION</scope>
    <source>
        <strain>cv. Nipponbare</strain>
    </source>
</reference>
<reference key="5">
    <citation type="journal article" date="2013" name="Rice">
        <title>Improvement of the Oryza sativa Nipponbare reference genome using next generation sequence and optical map data.</title>
        <authorList>
            <person name="Kawahara Y."/>
            <person name="de la Bastide M."/>
            <person name="Hamilton J.P."/>
            <person name="Kanamori H."/>
            <person name="McCombie W.R."/>
            <person name="Ouyang S."/>
            <person name="Schwartz D.C."/>
            <person name="Tanaka T."/>
            <person name="Wu J."/>
            <person name="Zhou S."/>
            <person name="Childs K.L."/>
            <person name="Davidson R.M."/>
            <person name="Lin H."/>
            <person name="Quesada-Ocampo L."/>
            <person name="Vaillancourt B."/>
            <person name="Sakai H."/>
            <person name="Lee S.S."/>
            <person name="Kim J."/>
            <person name="Numa H."/>
            <person name="Itoh T."/>
            <person name="Buell C.R."/>
            <person name="Matsumoto T."/>
        </authorList>
    </citation>
    <scope>GENOME REANNOTATION</scope>
    <source>
        <strain>cv. Nipponbare</strain>
    </source>
</reference>
<reference key="6">
    <citation type="journal article" date="2012" name="Biol. Direct">
        <title>ALOG domains: provenance of plant homeotic and developmental regulators from the DNA-binding domain of a novel class of DIRS1-type retroposons.</title>
        <authorList>
            <person name="Iyer L.M."/>
            <person name="Aravind L."/>
        </authorList>
    </citation>
    <scope>DNA-BINDING</scope>
    <scope>GENE FAMILY</scope>
</reference>
<comment type="function">
    <text evidence="1">Probable transcription regulator that acts as a developmental regulator by promoting cell growth in response to light.</text>
</comment>
<comment type="subcellular location">
    <subcellularLocation>
        <location evidence="1">Nucleus</location>
    </subcellularLocation>
</comment>
<comment type="similarity">
    <text evidence="4">Belongs to the plant homeotic and developmental regulators ALOG protein family.</text>
</comment>
<proteinExistence type="evidence at protein level"/>
<dbReference type="EMBL" id="AB512496">
    <property type="protein sequence ID" value="BAI52985.1"/>
    <property type="molecule type" value="mRNA"/>
</dbReference>
<dbReference type="EMBL" id="AP003734">
    <property type="protein sequence ID" value="BAB68109.1"/>
    <property type="molecule type" value="Genomic_DNA"/>
</dbReference>
<dbReference type="EMBL" id="AP008207">
    <property type="status" value="NOT_ANNOTATED_CDS"/>
    <property type="molecule type" value="Genomic_DNA"/>
</dbReference>
<dbReference type="EMBL" id="AP014957">
    <property type="protein sequence ID" value="BAS75037.1"/>
    <property type="molecule type" value="Genomic_DNA"/>
</dbReference>
<dbReference type="SMR" id="Q941W1"/>
<dbReference type="FunCoup" id="Q941W1">
    <property type="interactions" value="604"/>
</dbReference>
<dbReference type="PaxDb" id="39947-Q941W1"/>
<dbReference type="EnsemblPlants" id="Os01t0828900-00">
    <property type="protein sequence ID" value="Os01t0828900-00"/>
    <property type="gene ID" value="Os01g0828900"/>
</dbReference>
<dbReference type="GeneID" id="107278610"/>
<dbReference type="Gramene" id="Os01t0828900-00">
    <property type="protein sequence ID" value="Os01t0828900-00"/>
    <property type="gene ID" value="Os01g0828900"/>
</dbReference>
<dbReference type="KEGG" id="osa:107278610"/>
<dbReference type="eggNOG" id="ENOG502QPZE">
    <property type="taxonomic scope" value="Eukaryota"/>
</dbReference>
<dbReference type="HOGENOM" id="CLU_071168_3_0_1"/>
<dbReference type="InParanoid" id="Q941W1"/>
<dbReference type="OMA" id="HTAGCAY"/>
<dbReference type="OrthoDB" id="1906822at2759"/>
<dbReference type="Proteomes" id="UP000000763">
    <property type="component" value="Chromosome 1"/>
</dbReference>
<dbReference type="Proteomes" id="UP000059680">
    <property type="component" value="Chromosome 1"/>
</dbReference>
<dbReference type="GO" id="GO:0005634">
    <property type="term" value="C:nucleus"/>
    <property type="evidence" value="ECO:0000250"/>
    <property type="project" value="UniProtKB"/>
</dbReference>
<dbReference type="GO" id="GO:0003677">
    <property type="term" value="F:DNA binding"/>
    <property type="evidence" value="ECO:0007669"/>
    <property type="project" value="UniProtKB-KW"/>
</dbReference>
<dbReference type="GO" id="GO:0009299">
    <property type="term" value="P:mRNA transcription"/>
    <property type="evidence" value="ECO:0000250"/>
    <property type="project" value="UniProtKB"/>
</dbReference>
<dbReference type="GO" id="GO:0090698">
    <property type="term" value="P:post-embryonic plant morphogenesis"/>
    <property type="evidence" value="ECO:0000250"/>
    <property type="project" value="UniProtKB"/>
</dbReference>
<dbReference type="GO" id="GO:0009416">
    <property type="term" value="P:response to light stimulus"/>
    <property type="evidence" value="ECO:0000318"/>
    <property type="project" value="GO_Central"/>
</dbReference>
<dbReference type="InterPro" id="IPR040222">
    <property type="entry name" value="ALOG"/>
</dbReference>
<dbReference type="InterPro" id="IPR006936">
    <property type="entry name" value="ALOG_dom"/>
</dbReference>
<dbReference type="PANTHER" id="PTHR31165">
    <property type="entry name" value="PROTEIN G1-LIKE2"/>
    <property type="match status" value="1"/>
</dbReference>
<dbReference type="PANTHER" id="PTHR31165:SF78">
    <property type="entry name" value="PROTEIN G1-LIKE7"/>
    <property type="match status" value="1"/>
</dbReference>
<dbReference type="Pfam" id="PF04852">
    <property type="entry name" value="ALOG_dom"/>
    <property type="match status" value="1"/>
</dbReference>
<dbReference type="PROSITE" id="PS51697">
    <property type="entry name" value="ALOG"/>
    <property type="match status" value="1"/>
</dbReference>
<organism>
    <name type="scientific">Oryza sativa subsp. japonica</name>
    <name type="common">Rice</name>
    <dbReference type="NCBI Taxonomy" id="39947"/>
    <lineage>
        <taxon>Eukaryota</taxon>
        <taxon>Viridiplantae</taxon>
        <taxon>Streptophyta</taxon>
        <taxon>Embryophyta</taxon>
        <taxon>Tracheophyta</taxon>
        <taxon>Spermatophyta</taxon>
        <taxon>Magnoliopsida</taxon>
        <taxon>Liliopsida</taxon>
        <taxon>Poales</taxon>
        <taxon>Poaceae</taxon>
        <taxon>BOP clade</taxon>
        <taxon>Oryzoideae</taxon>
        <taxon>Oryzeae</taxon>
        <taxon>Oryzinae</taxon>
        <taxon>Oryza</taxon>
        <taxon>Oryza sativa</taxon>
    </lineage>
</organism>
<keyword id="KW-0217">Developmental protein</keyword>
<keyword id="KW-0238">DNA-binding</keyword>
<keyword id="KW-0539">Nucleus</keyword>
<keyword id="KW-1185">Reference proteome</keyword>
<keyword id="KW-0804">Transcription</keyword>
<keyword id="KW-0805">Transcription regulation</keyword>
<accession>Q941W1</accession>
<accession>A0A0P0V9Z7</accession>
<evidence type="ECO:0000250" key="1"/>
<evidence type="ECO:0000255" key="2">
    <source>
        <dbReference type="PROSITE-ProRule" id="PRU01033"/>
    </source>
</evidence>
<evidence type="ECO:0000256" key="3">
    <source>
        <dbReference type="SAM" id="MobiDB-lite"/>
    </source>
</evidence>
<evidence type="ECO:0000305" key="4"/>
<name>G1L7_ORYSJ</name>
<sequence length="212" mass="21743">MDPSGPGPSSAAAGGAPAVAAAPQPPAQLSRYESQKRRDWNTFLQYLRNHRPPLTLARCSGAHVIEFLRYLDQFGKTKVHASGCAFYGQPSPPGPCPCPLRQAWGSLDALIGRLRAAYEESGGTPESNPFAARAVRIYLREVRDSQAKARGIPYEKKKRKRSQAAQPAGVEPSGSSSAAAAAAGGGDAGSGGGAAATTTAQPGGSGTAPSAS</sequence>
<protein>
    <recommendedName>
        <fullName>Protein G1-like7</fullName>
    </recommendedName>
</protein>